<organism>
    <name type="scientific">Bacillus thuringiensis (strain Al Hakam)</name>
    <dbReference type="NCBI Taxonomy" id="412694"/>
    <lineage>
        <taxon>Bacteria</taxon>
        <taxon>Bacillati</taxon>
        <taxon>Bacillota</taxon>
        <taxon>Bacilli</taxon>
        <taxon>Bacillales</taxon>
        <taxon>Bacillaceae</taxon>
        <taxon>Bacillus</taxon>
        <taxon>Bacillus cereus group</taxon>
    </lineage>
</organism>
<accession>A0RCF8</accession>
<comment type="catalytic activity">
    <reaction evidence="1">
        <text>D-serine = pyruvate + NH4(+)</text>
        <dbReference type="Rhea" id="RHEA:13977"/>
        <dbReference type="ChEBI" id="CHEBI:15361"/>
        <dbReference type="ChEBI" id="CHEBI:28938"/>
        <dbReference type="ChEBI" id="CHEBI:35247"/>
        <dbReference type="EC" id="4.3.1.18"/>
    </reaction>
</comment>
<comment type="cofactor">
    <cofactor evidence="1">
        <name>pyridoxal 5'-phosphate</name>
        <dbReference type="ChEBI" id="CHEBI:597326"/>
    </cofactor>
</comment>
<comment type="similarity">
    <text evidence="1">Belongs to the serine/threonine dehydratase family. DsdA subfamily.</text>
</comment>
<comment type="sequence caution" evidence="2">
    <conflict type="erroneous initiation">
        <sequence resource="EMBL-CDS" id="ABK84901"/>
    </conflict>
</comment>
<name>SDHD_BACAH</name>
<sequence>MKEIEKLKEEYPLLNKLIETEEVLWVNPNMEKYETAIKDSPLSEENVKDAKERLKRFASYIAKVFPETKETKGIIESPLLKIPSMKQALEKNYEQPILGELLLKCDSHLPISGSIKARGGIYEVLKHAEQLALQHGMLTEEDDYSILDSDTCREFFAKYSIAVGSTGNLGLSIGIMSAKLGFNVTVHMSADAKQWKKDLLRSKGVNVIEYEADYSKAVEEGRRQADADPSCYFVDDENSHDLFLGYAVAASRLQKQLEELEIIVDEEHPLFVYLPCGVGGGPGGVAFGLKLLYKDNVHCFFAEPTHSPCMLIGLMTGLHDKIAVQDIGIDNVTDADGLAVGRPSGFVGKTMEPFLSGDYTVSDEELYRLLKELADTENIYLEPSALAGMIGPVRVCKEDAYLQKQQLMEKVQKGTHIVWGTGGSMVPEDVMNGYYKTGEALTILEK</sequence>
<gene>
    <name evidence="1" type="primary">dsdA</name>
    <name type="ordered locus">BALH_1568</name>
</gene>
<protein>
    <recommendedName>
        <fullName evidence="1">Probable D-serine dehydratase</fullName>
        <ecNumber evidence="1">4.3.1.18</ecNumber>
    </recommendedName>
    <alternativeName>
        <fullName evidence="1">D-serine deaminase</fullName>
        <shortName evidence="1">DSD</shortName>
    </alternativeName>
</protein>
<evidence type="ECO:0000255" key="1">
    <source>
        <dbReference type="HAMAP-Rule" id="MF_01030"/>
    </source>
</evidence>
<evidence type="ECO:0000305" key="2"/>
<keyword id="KW-0456">Lyase</keyword>
<keyword id="KW-0663">Pyridoxal phosphate</keyword>
<feature type="chain" id="PRO_0000291719" description="Probable D-serine dehydratase">
    <location>
        <begin position="1"/>
        <end position="446"/>
    </location>
</feature>
<feature type="modified residue" description="N6-(pyridoxal phosphate)lysine" evidence="1">
    <location>
        <position position="116"/>
    </location>
</feature>
<proteinExistence type="inferred from homology"/>
<reference key="1">
    <citation type="journal article" date="2007" name="J. Bacteriol.">
        <title>The complete genome sequence of Bacillus thuringiensis Al Hakam.</title>
        <authorList>
            <person name="Challacombe J.F."/>
            <person name="Altherr M.R."/>
            <person name="Xie G."/>
            <person name="Bhotika S.S."/>
            <person name="Brown N."/>
            <person name="Bruce D."/>
            <person name="Campbell C.S."/>
            <person name="Campbell M.L."/>
            <person name="Chen J."/>
            <person name="Chertkov O."/>
            <person name="Cleland C."/>
            <person name="Dimitrijevic M."/>
            <person name="Doggett N.A."/>
            <person name="Fawcett J.J."/>
            <person name="Glavina T."/>
            <person name="Goodwin L.A."/>
            <person name="Green L.D."/>
            <person name="Han C.S."/>
            <person name="Hill K.K."/>
            <person name="Hitchcock P."/>
            <person name="Jackson P.J."/>
            <person name="Keim P."/>
            <person name="Kewalramani A.R."/>
            <person name="Longmire J."/>
            <person name="Lucas S."/>
            <person name="Malfatti S."/>
            <person name="Martinez D."/>
            <person name="McMurry K."/>
            <person name="Meincke L.J."/>
            <person name="Misra M."/>
            <person name="Moseman B.L."/>
            <person name="Mundt M."/>
            <person name="Munk A.C."/>
            <person name="Okinaka R.T."/>
            <person name="Parson-Quintana B."/>
            <person name="Reilly L.P."/>
            <person name="Richardson P."/>
            <person name="Robinson D.L."/>
            <person name="Saunders E."/>
            <person name="Tapia R."/>
            <person name="Tesmer J.G."/>
            <person name="Thayer N."/>
            <person name="Thompson L.S."/>
            <person name="Tice H."/>
            <person name="Ticknor L.O."/>
            <person name="Wills P.L."/>
            <person name="Gilna P."/>
            <person name="Brettin T.S."/>
        </authorList>
    </citation>
    <scope>NUCLEOTIDE SEQUENCE [LARGE SCALE GENOMIC DNA]</scope>
    <source>
        <strain>Al Hakam</strain>
    </source>
</reference>
<dbReference type="EC" id="4.3.1.18" evidence="1"/>
<dbReference type="EMBL" id="CP000485">
    <property type="protein sequence ID" value="ABK84901.1"/>
    <property type="status" value="ALT_INIT"/>
    <property type="molecule type" value="Genomic_DNA"/>
</dbReference>
<dbReference type="RefSeq" id="WP_000658358.1">
    <property type="nucleotide sequence ID" value="NC_008600.1"/>
</dbReference>
<dbReference type="SMR" id="A0RCF8"/>
<dbReference type="KEGG" id="btl:BALH_1568"/>
<dbReference type="HOGENOM" id="CLU_035707_0_0_9"/>
<dbReference type="GO" id="GO:0008721">
    <property type="term" value="F:D-serine ammonia-lyase activity"/>
    <property type="evidence" value="ECO:0007669"/>
    <property type="project" value="UniProtKB-EC"/>
</dbReference>
<dbReference type="GO" id="GO:0016836">
    <property type="term" value="F:hydro-lyase activity"/>
    <property type="evidence" value="ECO:0007669"/>
    <property type="project" value="UniProtKB-UniRule"/>
</dbReference>
<dbReference type="GO" id="GO:0030170">
    <property type="term" value="F:pyridoxal phosphate binding"/>
    <property type="evidence" value="ECO:0007669"/>
    <property type="project" value="InterPro"/>
</dbReference>
<dbReference type="GO" id="GO:0036088">
    <property type="term" value="P:D-serine catabolic process"/>
    <property type="evidence" value="ECO:0007669"/>
    <property type="project" value="TreeGrafter"/>
</dbReference>
<dbReference type="GO" id="GO:0009097">
    <property type="term" value="P:isoleucine biosynthetic process"/>
    <property type="evidence" value="ECO:0007669"/>
    <property type="project" value="TreeGrafter"/>
</dbReference>
<dbReference type="CDD" id="cd06447">
    <property type="entry name" value="D-Ser-dehyd"/>
    <property type="match status" value="1"/>
</dbReference>
<dbReference type="FunFam" id="3.40.50.1100:FF:000018">
    <property type="entry name" value="D-serine dehydratase"/>
    <property type="match status" value="1"/>
</dbReference>
<dbReference type="Gene3D" id="3.40.50.1100">
    <property type="match status" value="2"/>
</dbReference>
<dbReference type="HAMAP" id="MF_01030">
    <property type="entry name" value="D_Ser_dehydrat"/>
    <property type="match status" value="1"/>
</dbReference>
<dbReference type="InterPro" id="IPR011780">
    <property type="entry name" value="D_Ser_am_lyase"/>
</dbReference>
<dbReference type="InterPro" id="IPR050147">
    <property type="entry name" value="Ser/Thr_Dehydratase"/>
</dbReference>
<dbReference type="InterPro" id="IPR000634">
    <property type="entry name" value="Ser/Thr_deHydtase_PyrdxlP-BS"/>
</dbReference>
<dbReference type="InterPro" id="IPR001926">
    <property type="entry name" value="TrpB-like_PALP"/>
</dbReference>
<dbReference type="InterPro" id="IPR036052">
    <property type="entry name" value="TrpB-like_PALP_sf"/>
</dbReference>
<dbReference type="NCBIfam" id="TIGR02035">
    <property type="entry name" value="D_Ser_am_lyase"/>
    <property type="match status" value="1"/>
</dbReference>
<dbReference type="NCBIfam" id="NF002823">
    <property type="entry name" value="PRK02991.1"/>
    <property type="match status" value="1"/>
</dbReference>
<dbReference type="PANTHER" id="PTHR48078:SF9">
    <property type="entry name" value="D-SERINE DEHYDRATASE"/>
    <property type="match status" value="1"/>
</dbReference>
<dbReference type="PANTHER" id="PTHR48078">
    <property type="entry name" value="THREONINE DEHYDRATASE, MITOCHONDRIAL-RELATED"/>
    <property type="match status" value="1"/>
</dbReference>
<dbReference type="Pfam" id="PF00291">
    <property type="entry name" value="PALP"/>
    <property type="match status" value="1"/>
</dbReference>
<dbReference type="SUPFAM" id="SSF53686">
    <property type="entry name" value="Tryptophan synthase beta subunit-like PLP-dependent enzymes"/>
    <property type="match status" value="1"/>
</dbReference>
<dbReference type="PROSITE" id="PS00165">
    <property type="entry name" value="DEHYDRATASE_SER_THR"/>
    <property type="match status" value="1"/>
</dbReference>